<organism>
    <name type="scientific">Acanthamoeba polyphaga mimivirus</name>
    <name type="common">APMV</name>
    <dbReference type="NCBI Taxonomy" id="212035"/>
    <lineage>
        <taxon>Viruses</taxon>
        <taxon>Varidnaviria</taxon>
        <taxon>Bamfordvirae</taxon>
        <taxon>Nucleocytoviricota</taxon>
        <taxon>Megaviricetes</taxon>
        <taxon>Imitervirales</taxon>
        <taxon>Mimiviridae</taxon>
        <taxon>Megamimivirinae</taxon>
        <taxon>Mimivirus</taxon>
        <taxon>Mimivirus bradfordmassiliense</taxon>
    </lineage>
</organism>
<sequence>MKRIRDVLSHENSNNTNYSDTNDTDYNDSHKLEKQYYEIDYEKFLLDSDIQEKYTKHIEYMLNKLLNKYKNKFVKKIIYDNLITNIINDFSDIIIDLSNQLDYVKQLTNKDFANKQIIDNMLIFLVKYEKILHSALARFVDIYFMRRLLDKKYVTNAVVYTGAYHSVTYIYLLSKIGFQMTHIVKSMVQSVAVANIVLNDIDDVSYRRNIYNLMYFFENNPFSQQCIDVSKFPKSFL</sequence>
<organismHost>
    <name type="scientific">Acanthamoeba polyphaga</name>
    <name type="common">Amoeba</name>
    <dbReference type="NCBI Taxonomy" id="5757"/>
</organismHost>
<name>YR130_MIMIV</name>
<gene>
    <name type="ordered locus">MIMI_R130</name>
</gene>
<keyword id="KW-1185">Reference proteome</keyword>
<dbReference type="EMBL" id="AY653733">
    <property type="protein sequence ID" value="AAV50405.1"/>
    <property type="molecule type" value="Genomic_DNA"/>
</dbReference>
<dbReference type="KEGG" id="vg:9924730"/>
<dbReference type="OrthoDB" id="37981at10239"/>
<dbReference type="Proteomes" id="UP000001134">
    <property type="component" value="Genome"/>
</dbReference>
<dbReference type="InterPro" id="IPR043885">
    <property type="entry name" value="DUF5847"/>
</dbReference>
<dbReference type="Pfam" id="PF19165">
    <property type="entry name" value="DUF5847"/>
    <property type="match status" value="1"/>
</dbReference>
<evidence type="ECO:0000256" key="1">
    <source>
        <dbReference type="SAM" id="MobiDB-lite"/>
    </source>
</evidence>
<evidence type="ECO:0000305" key="2"/>
<comment type="similarity">
    <text evidence="2">Belongs to the mimivirus R160 family.</text>
</comment>
<reference key="1">
    <citation type="journal article" date="2004" name="Science">
        <title>The 1.2-megabase genome sequence of Mimivirus.</title>
        <authorList>
            <person name="Raoult D."/>
            <person name="Audic S."/>
            <person name="Robert C."/>
            <person name="Abergel C."/>
            <person name="Renesto P."/>
            <person name="Ogata H."/>
            <person name="La Scola B."/>
            <person name="Susan M."/>
            <person name="Claverie J.-M."/>
        </authorList>
    </citation>
    <scope>NUCLEOTIDE SEQUENCE [LARGE SCALE GENOMIC DNA]</scope>
    <source>
        <strain>Rowbotham-Bradford</strain>
    </source>
</reference>
<accession>Q5UPK5</accession>
<proteinExistence type="inferred from homology"/>
<feature type="chain" id="PRO_0000071216" description="Uncharacterized protein R130">
    <location>
        <begin position="1"/>
        <end position="237"/>
    </location>
</feature>
<feature type="region of interest" description="Disordered" evidence="1">
    <location>
        <begin position="1"/>
        <end position="26"/>
    </location>
</feature>
<feature type="compositionally biased region" description="Low complexity" evidence="1">
    <location>
        <begin position="12"/>
        <end position="21"/>
    </location>
</feature>
<protein>
    <recommendedName>
        <fullName>Uncharacterized protein R130</fullName>
    </recommendedName>
</protein>